<feature type="chain" id="PRO_0000454808" description="Protein CYSTEINE-RICH TRANSMEMBRANE MODULE 11">
    <location>
        <begin position="1"/>
        <end position="76"/>
    </location>
</feature>
<feature type="transmembrane region" description="Helical" evidence="1">
    <location>
        <begin position="47"/>
        <end position="63"/>
    </location>
</feature>
<feature type="region of interest" description="Disordered" evidence="2">
    <location>
        <begin position="19"/>
        <end position="45"/>
    </location>
</feature>
<comment type="function">
    <text evidence="4">Involved in resistance to abiotic stress.</text>
</comment>
<comment type="subunit">
    <text evidence="3">Heterodimers (PubMed:29272523). Interacts with CYSTM6, CYSTM7 and WIH1/CYSTM13 (PubMed:29272523).</text>
</comment>
<comment type="subcellular location">
    <subcellularLocation>
        <location evidence="3">Cell membrane</location>
        <topology evidence="1">Single-pass membrane protein</topology>
    </subcellularLocation>
    <subcellularLocation>
        <location evidence="3">Cytoplasm</location>
    </subcellularLocation>
</comment>
<comment type="tissue specificity">
    <text evidence="3">Mostly expressed in stems, siliques, leaves and flowers and, to a lower extent, in roots.</text>
</comment>
<comment type="induction">
    <text evidence="3">Induced by heat.</text>
</comment>
<comment type="similarity">
    <text evidence="5">Belongs to the CYSTM1 family.</text>
</comment>
<evidence type="ECO:0000255" key="1"/>
<evidence type="ECO:0000256" key="2">
    <source>
        <dbReference type="SAM" id="MobiDB-lite"/>
    </source>
</evidence>
<evidence type="ECO:0000269" key="3">
    <source>
    </source>
</evidence>
<evidence type="ECO:0000303" key="4">
    <source>
    </source>
</evidence>
<evidence type="ECO:0000305" key="5"/>
<evidence type="ECO:0000312" key="6">
    <source>
        <dbReference type="Araport" id="AT4G33660"/>
    </source>
</evidence>
<evidence type="ECO:0000312" key="7">
    <source>
        <dbReference type="EMBL" id="AL031394"/>
    </source>
</evidence>
<dbReference type="EMBL" id="AL031394">
    <property type="status" value="NOT_ANNOTATED_CDS"/>
    <property type="molecule type" value="Genomic_DNA"/>
</dbReference>
<dbReference type="EMBL" id="CP002687">
    <property type="protein sequence ID" value="AEE86262.1"/>
    <property type="molecule type" value="Genomic_DNA"/>
</dbReference>
<dbReference type="EMBL" id="BT024533">
    <property type="protein sequence ID" value="ABD38872.1"/>
    <property type="molecule type" value="mRNA"/>
</dbReference>
<dbReference type="EMBL" id="AY084490">
    <property type="protein sequence ID" value="AAM61060.1"/>
    <property type="molecule type" value="mRNA"/>
</dbReference>
<dbReference type="RefSeq" id="NP_567932.1">
    <property type="nucleotide sequence ID" value="NM_119522.4"/>
</dbReference>
<dbReference type="SMR" id="Q8LG30"/>
<dbReference type="FunCoup" id="Q8LG30">
    <property type="interactions" value="1"/>
</dbReference>
<dbReference type="PaxDb" id="3702-AT4G33660.1"/>
<dbReference type="EnsemblPlants" id="AT4G33660.1">
    <property type="protein sequence ID" value="AT4G33660.1"/>
    <property type="gene ID" value="AT4G33660"/>
</dbReference>
<dbReference type="GeneID" id="829507"/>
<dbReference type="Gramene" id="AT4G33660.1">
    <property type="protein sequence ID" value="AT4G33660.1"/>
    <property type="gene ID" value="AT4G33660"/>
</dbReference>
<dbReference type="KEGG" id="ath:AT4G33660"/>
<dbReference type="Araport" id="AT4G33660"/>
<dbReference type="TAIR" id="AT4G33660">
    <property type="gene designation" value="ATHCYSTM11"/>
</dbReference>
<dbReference type="HOGENOM" id="CLU_128451_5_0_1"/>
<dbReference type="InParanoid" id="Q8LG30"/>
<dbReference type="OMA" id="NEPKYAY"/>
<dbReference type="PRO" id="PR:Q8LG30"/>
<dbReference type="Proteomes" id="UP000006548">
    <property type="component" value="Chromosome 4"/>
</dbReference>
<dbReference type="ExpressionAtlas" id="Q8LG30">
    <property type="expression patterns" value="baseline and differential"/>
</dbReference>
<dbReference type="GO" id="GO:0005737">
    <property type="term" value="C:cytoplasm"/>
    <property type="evidence" value="ECO:0000314"/>
    <property type="project" value="UniProtKB"/>
</dbReference>
<dbReference type="GO" id="GO:0005886">
    <property type="term" value="C:plasma membrane"/>
    <property type="evidence" value="ECO:0000314"/>
    <property type="project" value="UniProtKB"/>
</dbReference>
<dbReference type="InterPro" id="IPR028144">
    <property type="entry name" value="CYSTM_dom"/>
</dbReference>
<dbReference type="InterPro" id="IPR044850">
    <property type="entry name" value="WIH1-like"/>
</dbReference>
<dbReference type="PANTHER" id="PTHR31568:SF105">
    <property type="entry name" value="PROTEIN CYSTEINE-RICH TRANSMEMBRANE MODULE 11"/>
    <property type="match status" value="1"/>
</dbReference>
<dbReference type="PANTHER" id="PTHR31568">
    <property type="entry name" value="RCG49325, ISOFORM CRA_A"/>
    <property type="match status" value="1"/>
</dbReference>
<dbReference type="Pfam" id="PF12734">
    <property type="entry name" value="CYSTM"/>
    <property type="match status" value="1"/>
</dbReference>
<proteinExistence type="evidence at protein level"/>
<keyword id="KW-1003">Cell membrane</keyword>
<keyword id="KW-0963">Cytoplasm</keyword>
<keyword id="KW-0472">Membrane</keyword>
<keyword id="KW-1185">Reference proteome</keyword>
<keyword id="KW-0812">Transmembrane</keyword>
<keyword id="KW-1133">Transmembrane helix</keyword>
<organism>
    <name type="scientific">Arabidopsis thaliana</name>
    <name type="common">Mouse-ear cress</name>
    <dbReference type="NCBI Taxonomy" id="3702"/>
    <lineage>
        <taxon>Eukaryota</taxon>
        <taxon>Viridiplantae</taxon>
        <taxon>Streptophyta</taxon>
        <taxon>Embryophyta</taxon>
        <taxon>Tracheophyta</taxon>
        <taxon>Spermatophyta</taxon>
        <taxon>Magnoliopsida</taxon>
        <taxon>eudicotyledons</taxon>
        <taxon>Gunneridae</taxon>
        <taxon>Pentapetalae</taxon>
        <taxon>rosids</taxon>
        <taxon>malvids</taxon>
        <taxon>Brassicales</taxon>
        <taxon>Brassicaceae</taxon>
        <taxon>Camelineae</taxon>
        <taxon>Arabidopsis</taxon>
    </lineage>
</organism>
<sequence>MSDPKYAYPYPAPGNYPQGPPPPVGVPPQYYPPPPPPPPPPPPPRKVGFLEGLLAALCCCCLVDECCCDPTIICFD</sequence>
<gene>
    <name evidence="4" type="primary">CYSTM11</name>
    <name evidence="6" type="ordered locus">At4g33660</name>
    <name evidence="7" type="ORF">T16L1.2</name>
</gene>
<name>CST11_ARATH</name>
<reference key="1">
    <citation type="journal article" date="1999" name="Nature">
        <title>Sequence and analysis of chromosome 4 of the plant Arabidopsis thaliana.</title>
        <authorList>
            <person name="Mayer K.F.X."/>
            <person name="Schueller C."/>
            <person name="Wambutt R."/>
            <person name="Murphy G."/>
            <person name="Volckaert G."/>
            <person name="Pohl T."/>
            <person name="Duesterhoeft A."/>
            <person name="Stiekema W."/>
            <person name="Entian K.-D."/>
            <person name="Terryn N."/>
            <person name="Harris B."/>
            <person name="Ansorge W."/>
            <person name="Brandt P."/>
            <person name="Grivell L.A."/>
            <person name="Rieger M."/>
            <person name="Weichselgartner M."/>
            <person name="de Simone V."/>
            <person name="Obermaier B."/>
            <person name="Mache R."/>
            <person name="Mueller M."/>
            <person name="Kreis M."/>
            <person name="Delseny M."/>
            <person name="Puigdomenech P."/>
            <person name="Watson M."/>
            <person name="Schmidtheini T."/>
            <person name="Reichert B."/>
            <person name="Portetelle D."/>
            <person name="Perez-Alonso M."/>
            <person name="Boutry M."/>
            <person name="Bancroft I."/>
            <person name="Vos P."/>
            <person name="Hoheisel J."/>
            <person name="Zimmermann W."/>
            <person name="Wedler H."/>
            <person name="Ridley P."/>
            <person name="Langham S.-A."/>
            <person name="McCullagh B."/>
            <person name="Bilham L."/>
            <person name="Robben J."/>
            <person name="van der Schueren J."/>
            <person name="Grymonprez B."/>
            <person name="Chuang Y.-J."/>
            <person name="Vandenbussche F."/>
            <person name="Braeken M."/>
            <person name="Weltjens I."/>
            <person name="Voet M."/>
            <person name="Bastiaens I."/>
            <person name="Aert R."/>
            <person name="Defoor E."/>
            <person name="Weitzenegger T."/>
            <person name="Bothe G."/>
            <person name="Ramsperger U."/>
            <person name="Hilbert H."/>
            <person name="Braun M."/>
            <person name="Holzer E."/>
            <person name="Brandt A."/>
            <person name="Peters S."/>
            <person name="van Staveren M."/>
            <person name="Dirkse W."/>
            <person name="Mooijman P."/>
            <person name="Klein Lankhorst R."/>
            <person name="Rose M."/>
            <person name="Hauf J."/>
            <person name="Koetter P."/>
            <person name="Berneiser S."/>
            <person name="Hempel S."/>
            <person name="Feldpausch M."/>
            <person name="Lamberth S."/>
            <person name="Van den Daele H."/>
            <person name="De Keyser A."/>
            <person name="Buysshaert C."/>
            <person name="Gielen J."/>
            <person name="Villarroel R."/>
            <person name="De Clercq R."/>
            <person name="van Montagu M."/>
            <person name="Rogers J."/>
            <person name="Cronin A."/>
            <person name="Quail M.A."/>
            <person name="Bray-Allen S."/>
            <person name="Clark L."/>
            <person name="Doggett J."/>
            <person name="Hall S."/>
            <person name="Kay M."/>
            <person name="Lennard N."/>
            <person name="McLay K."/>
            <person name="Mayes R."/>
            <person name="Pettett A."/>
            <person name="Rajandream M.A."/>
            <person name="Lyne M."/>
            <person name="Benes V."/>
            <person name="Rechmann S."/>
            <person name="Borkova D."/>
            <person name="Bloecker H."/>
            <person name="Scharfe M."/>
            <person name="Grimm M."/>
            <person name="Loehnert T.-H."/>
            <person name="Dose S."/>
            <person name="de Haan M."/>
            <person name="Maarse A.C."/>
            <person name="Schaefer M."/>
            <person name="Mueller-Auer S."/>
            <person name="Gabel C."/>
            <person name="Fuchs M."/>
            <person name="Fartmann B."/>
            <person name="Granderath K."/>
            <person name="Dauner D."/>
            <person name="Herzl A."/>
            <person name="Neumann S."/>
            <person name="Argiriou A."/>
            <person name="Vitale D."/>
            <person name="Liguori R."/>
            <person name="Piravandi E."/>
            <person name="Massenet O."/>
            <person name="Quigley F."/>
            <person name="Clabauld G."/>
            <person name="Muendlein A."/>
            <person name="Felber R."/>
            <person name="Schnabl S."/>
            <person name="Hiller R."/>
            <person name="Schmidt W."/>
            <person name="Lecharny A."/>
            <person name="Aubourg S."/>
            <person name="Chefdor F."/>
            <person name="Cooke R."/>
            <person name="Berger C."/>
            <person name="Monfort A."/>
            <person name="Casacuberta E."/>
            <person name="Gibbons T."/>
            <person name="Weber N."/>
            <person name="Vandenbol M."/>
            <person name="Bargues M."/>
            <person name="Terol J."/>
            <person name="Torres A."/>
            <person name="Perez-Perez A."/>
            <person name="Purnelle B."/>
            <person name="Bent E."/>
            <person name="Johnson S."/>
            <person name="Tacon D."/>
            <person name="Jesse T."/>
            <person name="Heijnen L."/>
            <person name="Schwarz S."/>
            <person name="Scholler P."/>
            <person name="Heber S."/>
            <person name="Francs P."/>
            <person name="Bielke C."/>
            <person name="Frishman D."/>
            <person name="Haase D."/>
            <person name="Lemcke K."/>
            <person name="Mewes H.-W."/>
            <person name="Stocker S."/>
            <person name="Zaccaria P."/>
            <person name="Bevan M."/>
            <person name="Wilson R.K."/>
            <person name="de la Bastide M."/>
            <person name="Habermann K."/>
            <person name="Parnell L."/>
            <person name="Dedhia N."/>
            <person name="Gnoj L."/>
            <person name="Schutz K."/>
            <person name="Huang E."/>
            <person name="Spiegel L."/>
            <person name="Sekhon M."/>
            <person name="Murray J."/>
            <person name="Sheet P."/>
            <person name="Cordes M."/>
            <person name="Abu-Threideh J."/>
            <person name="Stoneking T."/>
            <person name="Kalicki J."/>
            <person name="Graves T."/>
            <person name="Harmon G."/>
            <person name="Edwards J."/>
            <person name="Latreille P."/>
            <person name="Courtney L."/>
            <person name="Cloud J."/>
            <person name="Abbott A."/>
            <person name="Scott K."/>
            <person name="Johnson D."/>
            <person name="Minx P."/>
            <person name="Bentley D."/>
            <person name="Fulton B."/>
            <person name="Miller N."/>
            <person name="Greco T."/>
            <person name="Kemp K."/>
            <person name="Kramer J."/>
            <person name="Fulton L."/>
            <person name="Mardis E."/>
            <person name="Dante M."/>
            <person name="Pepin K."/>
            <person name="Hillier L.W."/>
            <person name="Nelson J."/>
            <person name="Spieth J."/>
            <person name="Ryan E."/>
            <person name="Andrews S."/>
            <person name="Geisel C."/>
            <person name="Layman D."/>
            <person name="Du H."/>
            <person name="Ali J."/>
            <person name="Berghoff A."/>
            <person name="Jones K."/>
            <person name="Drone K."/>
            <person name="Cotton M."/>
            <person name="Joshu C."/>
            <person name="Antonoiu B."/>
            <person name="Zidanic M."/>
            <person name="Strong C."/>
            <person name="Sun H."/>
            <person name="Lamar B."/>
            <person name="Yordan C."/>
            <person name="Ma P."/>
            <person name="Zhong J."/>
            <person name="Preston R."/>
            <person name="Vil D."/>
            <person name="Shekher M."/>
            <person name="Matero A."/>
            <person name="Shah R."/>
            <person name="Swaby I.K."/>
            <person name="O'Shaughnessy A."/>
            <person name="Rodriguez M."/>
            <person name="Hoffman J."/>
            <person name="Till S."/>
            <person name="Granat S."/>
            <person name="Shohdy N."/>
            <person name="Hasegawa A."/>
            <person name="Hameed A."/>
            <person name="Lodhi M."/>
            <person name="Johnson A."/>
            <person name="Chen E."/>
            <person name="Marra M.A."/>
            <person name="Martienssen R."/>
            <person name="McCombie W.R."/>
        </authorList>
    </citation>
    <scope>NUCLEOTIDE SEQUENCE [LARGE SCALE GENOMIC DNA]</scope>
    <source>
        <strain>cv. Columbia</strain>
    </source>
</reference>
<reference key="2">
    <citation type="journal article" date="2017" name="Plant J.">
        <title>Araport11: a complete reannotation of the Arabidopsis thaliana reference genome.</title>
        <authorList>
            <person name="Cheng C.Y."/>
            <person name="Krishnakumar V."/>
            <person name="Chan A.P."/>
            <person name="Thibaud-Nissen F."/>
            <person name="Schobel S."/>
            <person name="Town C.D."/>
        </authorList>
    </citation>
    <scope>GENOME REANNOTATION</scope>
    <source>
        <strain>cv. Columbia</strain>
    </source>
</reference>
<reference key="3">
    <citation type="submission" date="2006-02" db="EMBL/GenBank/DDBJ databases">
        <title>Arabidopsis ORF clones.</title>
        <authorList>
            <person name="Shinn P."/>
            <person name="Chen H."/>
            <person name="Kim C.J."/>
            <person name="Ecker J.R."/>
        </authorList>
    </citation>
    <scope>NUCLEOTIDE SEQUENCE [LARGE SCALE MRNA]</scope>
    <source>
        <strain>cv. Columbia</strain>
    </source>
</reference>
<reference key="4">
    <citation type="submission" date="2002-03" db="EMBL/GenBank/DDBJ databases">
        <title>Full-length cDNA from Arabidopsis thaliana.</title>
        <authorList>
            <person name="Brover V.V."/>
            <person name="Troukhan M.E."/>
            <person name="Alexandrov N.A."/>
            <person name="Lu Y.-P."/>
            <person name="Flavell R.B."/>
            <person name="Feldmann K.A."/>
        </authorList>
    </citation>
    <scope>NUCLEOTIDE SEQUENCE [LARGE SCALE MRNA]</scope>
</reference>
<reference key="5">
    <citation type="journal article" date="2018" name="Plant Cell Physiol.">
        <title>CYSTM, a novel non-secreted cysteine-rich peptide family, involved in environmental stresses in Arabidopsis thaliana.</title>
        <authorList>
            <person name="Xu Y."/>
            <person name="Yu Z."/>
            <person name="Zhang D."/>
            <person name="Huang J."/>
            <person name="Wu C."/>
            <person name="Yang G."/>
            <person name="Yan K."/>
            <person name="Zhang S."/>
            <person name="Zheng C."/>
        </authorList>
    </citation>
    <scope>FUNCTION</scope>
    <scope>INTERACTION WITH CYSTM6; CYSTM7 AND WIH1/CYSTM13</scope>
    <scope>TISSUE SPECIFICITY</scope>
    <scope>INDUCTION BY HEAT</scope>
    <scope>SUBCELLULAR LOCATION</scope>
    <source>
        <strain>cv. Columbia</strain>
    </source>
</reference>
<accession>Q8LG30</accession>
<protein>
    <recommendedName>
        <fullName evidence="4">Protein CYSTEINE-RICH TRANSMEMBRANE MODULE 11</fullName>
        <shortName evidence="4">AthCYSTM11</shortName>
    </recommendedName>
</protein>